<dbReference type="EMBL" id="CP001132">
    <property type="protein sequence ID" value="ACH82768.1"/>
    <property type="molecule type" value="Genomic_DNA"/>
</dbReference>
<dbReference type="RefSeq" id="WP_012536093.1">
    <property type="nucleotide sequence ID" value="NC_011206.1"/>
</dbReference>
<dbReference type="SMR" id="B5ELZ6"/>
<dbReference type="GeneID" id="65279722"/>
<dbReference type="KEGG" id="afe:Lferr_0514"/>
<dbReference type="eggNOG" id="COG0098">
    <property type="taxonomic scope" value="Bacteria"/>
</dbReference>
<dbReference type="HOGENOM" id="CLU_065898_2_2_6"/>
<dbReference type="GO" id="GO:0015935">
    <property type="term" value="C:small ribosomal subunit"/>
    <property type="evidence" value="ECO:0007669"/>
    <property type="project" value="InterPro"/>
</dbReference>
<dbReference type="GO" id="GO:0019843">
    <property type="term" value="F:rRNA binding"/>
    <property type="evidence" value="ECO:0007669"/>
    <property type="project" value="UniProtKB-UniRule"/>
</dbReference>
<dbReference type="GO" id="GO:0003735">
    <property type="term" value="F:structural constituent of ribosome"/>
    <property type="evidence" value="ECO:0007669"/>
    <property type="project" value="InterPro"/>
</dbReference>
<dbReference type="GO" id="GO:0006412">
    <property type="term" value="P:translation"/>
    <property type="evidence" value="ECO:0007669"/>
    <property type="project" value="UniProtKB-UniRule"/>
</dbReference>
<dbReference type="FunFam" id="3.30.160.20:FF:000001">
    <property type="entry name" value="30S ribosomal protein S5"/>
    <property type="match status" value="1"/>
</dbReference>
<dbReference type="FunFam" id="3.30.230.10:FF:000002">
    <property type="entry name" value="30S ribosomal protein S5"/>
    <property type="match status" value="1"/>
</dbReference>
<dbReference type="Gene3D" id="3.30.160.20">
    <property type="match status" value="1"/>
</dbReference>
<dbReference type="Gene3D" id="3.30.230.10">
    <property type="match status" value="1"/>
</dbReference>
<dbReference type="HAMAP" id="MF_01307_B">
    <property type="entry name" value="Ribosomal_uS5_B"/>
    <property type="match status" value="1"/>
</dbReference>
<dbReference type="InterPro" id="IPR020568">
    <property type="entry name" value="Ribosomal_Su5_D2-typ_SF"/>
</dbReference>
<dbReference type="InterPro" id="IPR000851">
    <property type="entry name" value="Ribosomal_uS5"/>
</dbReference>
<dbReference type="InterPro" id="IPR005712">
    <property type="entry name" value="Ribosomal_uS5_bac-type"/>
</dbReference>
<dbReference type="InterPro" id="IPR005324">
    <property type="entry name" value="Ribosomal_uS5_C"/>
</dbReference>
<dbReference type="InterPro" id="IPR013810">
    <property type="entry name" value="Ribosomal_uS5_N"/>
</dbReference>
<dbReference type="InterPro" id="IPR014721">
    <property type="entry name" value="Ribsml_uS5_D2-typ_fold_subgr"/>
</dbReference>
<dbReference type="NCBIfam" id="TIGR01021">
    <property type="entry name" value="rpsE_bact"/>
    <property type="match status" value="1"/>
</dbReference>
<dbReference type="PANTHER" id="PTHR48277">
    <property type="entry name" value="MITOCHONDRIAL RIBOSOMAL PROTEIN S5"/>
    <property type="match status" value="1"/>
</dbReference>
<dbReference type="PANTHER" id="PTHR48277:SF1">
    <property type="entry name" value="MITOCHONDRIAL RIBOSOMAL PROTEIN S5"/>
    <property type="match status" value="1"/>
</dbReference>
<dbReference type="Pfam" id="PF00333">
    <property type="entry name" value="Ribosomal_S5"/>
    <property type="match status" value="1"/>
</dbReference>
<dbReference type="Pfam" id="PF03719">
    <property type="entry name" value="Ribosomal_S5_C"/>
    <property type="match status" value="1"/>
</dbReference>
<dbReference type="SUPFAM" id="SSF54768">
    <property type="entry name" value="dsRNA-binding domain-like"/>
    <property type="match status" value="1"/>
</dbReference>
<dbReference type="SUPFAM" id="SSF54211">
    <property type="entry name" value="Ribosomal protein S5 domain 2-like"/>
    <property type="match status" value="1"/>
</dbReference>
<dbReference type="PROSITE" id="PS50881">
    <property type="entry name" value="S5_DSRBD"/>
    <property type="match status" value="1"/>
</dbReference>
<feature type="chain" id="PRO_1000140832" description="Small ribosomal subunit protein uS5">
    <location>
        <begin position="1"/>
        <end position="176"/>
    </location>
</feature>
<feature type="domain" description="S5 DRBM" evidence="1">
    <location>
        <begin position="14"/>
        <end position="77"/>
    </location>
</feature>
<gene>
    <name evidence="1" type="primary">rpsE</name>
    <name type="ordered locus">Lferr_0514</name>
</gene>
<proteinExistence type="inferred from homology"/>
<name>RS5_ACIF5</name>
<accession>B5ELZ6</accession>
<sequence length="176" mass="18743">MARENRDTQPNDGMQEKLIHINRVSKVVKGGRQFGFAALMVVGDGDGKVGFGRGKAKEVPAGIQKATDQARRWMTSIPLMRGGTIPYPVEGRHGAARVMLRPAPEGSGVIAGGAMRAVCEAVGLRNVVAKSLGSNNPINVVRATFDAFDKLISPQAIAMKRGKSLKEIRGQGGHDE</sequence>
<evidence type="ECO:0000255" key="1">
    <source>
        <dbReference type="HAMAP-Rule" id="MF_01307"/>
    </source>
</evidence>
<evidence type="ECO:0000305" key="2"/>
<organism>
    <name type="scientific">Acidithiobacillus ferrooxidans (strain ATCC 53993 / BNL-5-31)</name>
    <name type="common">Leptospirillum ferrooxidans (ATCC 53993)</name>
    <dbReference type="NCBI Taxonomy" id="380394"/>
    <lineage>
        <taxon>Bacteria</taxon>
        <taxon>Pseudomonadati</taxon>
        <taxon>Pseudomonadota</taxon>
        <taxon>Acidithiobacillia</taxon>
        <taxon>Acidithiobacillales</taxon>
        <taxon>Acidithiobacillaceae</taxon>
        <taxon>Acidithiobacillus</taxon>
    </lineage>
</organism>
<keyword id="KW-0687">Ribonucleoprotein</keyword>
<keyword id="KW-0689">Ribosomal protein</keyword>
<keyword id="KW-0694">RNA-binding</keyword>
<keyword id="KW-0699">rRNA-binding</keyword>
<comment type="function">
    <text evidence="1">With S4 and S12 plays an important role in translational accuracy.</text>
</comment>
<comment type="function">
    <text evidence="1">Located at the back of the 30S subunit body where it stabilizes the conformation of the head with respect to the body.</text>
</comment>
<comment type="subunit">
    <text evidence="1">Part of the 30S ribosomal subunit. Contacts proteins S4 and S8.</text>
</comment>
<comment type="domain">
    <text>The N-terminal domain interacts with the head of the 30S subunit; the C-terminal domain interacts with the body and contacts protein S4. The interaction surface between S4 and S5 is involved in control of translational fidelity.</text>
</comment>
<comment type="similarity">
    <text evidence="1">Belongs to the universal ribosomal protein uS5 family.</text>
</comment>
<protein>
    <recommendedName>
        <fullName evidence="1">Small ribosomal subunit protein uS5</fullName>
    </recommendedName>
    <alternativeName>
        <fullName evidence="2">30S ribosomal protein S5</fullName>
    </alternativeName>
</protein>
<reference key="1">
    <citation type="submission" date="2008-08" db="EMBL/GenBank/DDBJ databases">
        <title>Complete sequence of Acidithiobacillus ferrooxidans ATCC 53993.</title>
        <authorList>
            <person name="Lucas S."/>
            <person name="Copeland A."/>
            <person name="Lapidus A."/>
            <person name="Glavina del Rio T."/>
            <person name="Dalin E."/>
            <person name="Tice H."/>
            <person name="Bruce D."/>
            <person name="Goodwin L."/>
            <person name="Pitluck S."/>
            <person name="Sims D."/>
            <person name="Brettin T."/>
            <person name="Detter J.C."/>
            <person name="Han C."/>
            <person name="Kuske C.R."/>
            <person name="Larimer F."/>
            <person name="Land M."/>
            <person name="Hauser L."/>
            <person name="Kyrpides N."/>
            <person name="Lykidis A."/>
            <person name="Borole A.P."/>
        </authorList>
    </citation>
    <scope>NUCLEOTIDE SEQUENCE [LARGE SCALE GENOMIC DNA]</scope>
    <source>
        <strain>ATCC 53993 / BNL-5-31</strain>
    </source>
</reference>